<organism>
    <name type="scientific">Prochlorococcus marinus (strain AS9601)</name>
    <dbReference type="NCBI Taxonomy" id="146891"/>
    <lineage>
        <taxon>Bacteria</taxon>
        <taxon>Bacillati</taxon>
        <taxon>Cyanobacteriota</taxon>
        <taxon>Cyanophyceae</taxon>
        <taxon>Synechococcales</taxon>
        <taxon>Prochlorococcaceae</taxon>
        <taxon>Prochlorococcus</taxon>
    </lineage>
</organism>
<name>FOLD_PROMS</name>
<comment type="function">
    <text evidence="1">Catalyzes the oxidation of 5,10-methylenetetrahydrofolate to 5,10-methenyltetrahydrofolate and then the hydrolysis of 5,10-methenyltetrahydrofolate to 10-formyltetrahydrofolate.</text>
</comment>
<comment type="catalytic activity">
    <reaction evidence="1">
        <text>(6R)-5,10-methylene-5,6,7,8-tetrahydrofolate + NADP(+) = (6R)-5,10-methenyltetrahydrofolate + NADPH</text>
        <dbReference type="Rhea" id="RHEA:22812"/>
        <dbReference type="ChEBI" id="CHEBI:15636"/>
        <dbReference type="ChEBI" id="CHEBI:57455"/>
        <dbReference type="ChEBI" id="CHEBI:57783"/>
        <dbReference type="ChEBI" id="CHEBI:58349"/>
        <dbReference type="EC" id="1.5.1.5"/>
    </reaction>
</comment>
<comment type="catalytic activity">
    <reaction evidence="1">
        <text>(6R)-5,10-methenyltetrahydrofolate + H2O = (6R)-10-formyltetrahydrofolate + H(+)</text>
        <dbReference type="Rhea" id="RHEA:23700"/>
        <dbReference type="ChEBI" id="CHEBI:15377"/>
        <dbReference type="ChEBI" id="CHEBI:15378"/>
        <dbReference type="ChEBI" id="CHEBI:57455"/>
        <dbReference type="ChEBI" id="CHEBI:195366"/>
        <dbReference type="EC" id="3.5.4.9"/>
    </reaction>
</comment>
<comment type="pathway">
    <text evidence="1">One-carbon metabolism; tetrahydrofolate interconversion.</text>
</comment>
<comment type="subunit">
    <text evidence="1">Homodimer.</text>
</comment>
<comment type="similarity">
    <text evidence="1">Belongs to the tetrahydrofolate dehydrogenase/cyclohydrolase family.</text>
</comment>
<keyword id="KW-0028">Amino-acid biosynthesis</keyword>
<keyword id="KW-0368">Histidine biosynthesis</keyword>
<keyword id="KW-0378">Hydrolase</keyword>
<keyword id="KW-0486">Methionine biosynthesis</keyword>
<keyword id="KW-0511">Multifunctional enzyme</keyword>
<keyword id="KW-0521">NADP</keyword>
<keyword id="KW-0554">One-carbon metabolism</keyword>
<keyword id="KW-0560">Oxidoreductase</keyword>
<keyword id="KW-0658">Purine biosynthesis</keyword>
<sequence>MSLKLDGKKLSLEIEKRLNDYISNNKIIAKRVPGLAVIRIGEDPASGVYVNNKEKACSRIGIKSFIFHLDESVEQKEVEQLIIKLNSDKDIDGMLLQLPIPKKFDEQKLISHINPSKDVDGLNEINIGKLVKNEPGMRSCTPAGIINLLRSQNITIEGKKIVVIGRSLLVGKPLSLMLLNLNGTVTMTHSKTLNLNKVCREADILIAAAGKPNLIDSSFVKEGAVIIDVGIHRLKSSDKNQTRLCGDVLLEDVISKVFAYTPVPGGVGPMTVTMLLVNTIFSWQKQFGLSSTLNDLLP</sequence>
<protein>
    <recommendedName>
        <fullName evidence="1">Bifunctional protein FolD</fullName>
    </recommendedName>
    <domain>
        <recommendedName>
            <fullName evidence="1">Methylenetetrahydrofolate dehydrogenase</fullName>
            <ecNumber evidence="1">1.5.1.5</ecNumber>
        </recommendedName>
    </domain>
    <domain>
        <recommendedName>
            <fullName evidence="1">Methenyltetrahydrofolate cyclohydrolase</fullName>
            <ecNumber evidence="1">3.5.4.9</ecNumber>
        </recommendedName>
    </domain>
</protein>
<dbReference type="EC" id="1.5.1.5" evidence="1"/>
<dbReference type="EC" id="3.5.4.9" evidence="1"/>
<dbReference type="EMBL" id="CP000551">
    <property type="protein sequence ID" value="ABM70458.1"/>
    <property type="molecule type" value="Genomic_DNA"/>
</dbReference>
<dbReference type="RefSeq" id="WP_011818605.1">
    <property type="nucleotide sequence ID" value="NC_008816.1"/>
</dbReference>
<dbReference type="SMR" id="A2BRP7"/>
<dbReference type="STRING" id="146891.A9601_11741"/>
<dbReference type="KEGG" id="pmb:A9601_11741"/>
<dbReference type="eggNOG" id="COG0190">
    <property type="taxonomic scope" value="Bacteria"/>
</dbReference>
<dbReference type="HOGENOM" id="CLU_034045_2_1_3"/>
<dbReference type="OrthoDB" id="9803580at2"/>
<dbReference type="UniPathway" id="UPA00193"/>
<dbReference type="Proteomes" id="UP000002590">
    <property type="component" value="Chromosome"/>
</dbReference>
<dbReference type="GO" id="GO:0005829">
    <property type="term" value="C:cytosol"/>
    <property type="evidence" value="ECO:0007669"/>
    <property type="project" value="TreeGrafter"/>
</dbReference>
<dbReference type="GO" id="GO:0004477">
    <property type="term" value="F:methenyltetrahydrofolate cyclohydrolase activity"/>
    <property type="evidence" value="ECO:0007669"/>
    <property type="project" value="UniProtKB-UniRule"/>
</dbReference>
<dbReference type="GO" id="GO:0004488">
    <property type="term" value="F:methylenetetrahydrofolate dehydrogenase (NADP+) activity"/>
    <property type="evidence" value="ECO:0007669"/>
    <property type="project" value="UniProtKB-UniRule"/>
</dbReference>
<dbReference type="GO" id="GO:0000105">
    <property type="term" value="P:L-histidine biosynthetic process"/>
    <property type="evidence" value="ECO:0007669"/>
    <property type="project" value="UniProtKB-KW"/>
</dbReference>
<dbReference type="GO" id="GO:0009086">
    <property type="term" value="P:methionine biosynthetic process"/>
    <property type="evidence" value="ECO:0007669"/>
    <property type="project" value="UniProtKB-KW"/>
</dbReference>
<dbReference type="GO" id="GO:0006164">
    <property type="term" value="P:purine nucleotide biosynthetic process"/>
    <property type="evidence" value="ECO:0007669"/>
    <property type="project" value="UniProtKB-KW"/>
</dbReference>
<dbReference type="GO" id="GO:0035999">
    <property type="term" value="P:tetrahydrofolate interconversion"/>
    <property type="evidence" value="ECO:0007669"/>
    <property type="project" value="UniProtKB-UniRule"/>
</dbReference>
<dbReference type="CDD" id="cd01080">
    <property type="entry name" value="NAD_bind_m-THF_DH_Cyclohyd"/>
    <property type="match status" value="1"/>
</dbReference>
<dbReference type="FunFam" id="3.40.50.720:FF:000006">
    <property type="entry name" value="Bifunctional protein FolD"/>
    <property type="match status" value="1"/>
</dbReference>
<dbReference type="FunFam" id="3.40.50.10860:FF:000005">
    <property type="entry name" value="C-1-tetrahydrofolate synthase, cytoplasmic, putative"/>
    <property type="match status" value="1"/>
</dbReference>
<dbReference type="Gene3D" id="3.40.50.10860">
    <property type="entry name" value="Leucine Dehydrogenase, chain A, domain 1"/>
    <property type="match status" value="1"/>
</dbReference>
<dbReference type="Gene3D" id="3.40.50.720">
    <property type="entry name" value="NAD(P)-binding Rossmann-like Domain"/>
    <property type="match status" value="1"/>
</dbReference>
<dbReference type="HAMAP" id="MF_01576">
    <property type="entry name" value="THF_DHG_CYH"/>
    <property type="match status" value="1"/>
</dbReference>
<dbReference type="InterPro" id="IPR046346">
    <property type="entry name" value="Aminoacid_DH-like_N_sf"/>
</dbReference>
<dbReference type="InterPro" id="IPR036291">
    <property type="entry name" value="NAD(P)-bd_dom_sf"/>
</dbReference>
<dbReference type="InterPro" id="IPR000672">
    <property type="entry name" value="THF_DH/CycHdrlase"/>
</dbReference>
<dbReference type="InterPro" id="IPR020630">
    <property type="entry name" value="THF_DH/CycHdrlase_cat_dom"/>
</dbReference>
<dbReference type="InterPro" id="IPR020867">
    <property type="entry name" value="THF_DH/CycHdrlase_CS"/>
</dbReference>
<dbReference type="InterPro" id="IPR020631">
    <property type="entry name" value="THF_DH/CycHdrlase_NAD-bd_dom"/>
</dbReference>
<dbReference type="NCBIfam" id="NF010783">
    <property type="entry name" value="PRK14186.1"/>
    <property type="match status" value="1"/>
</dbReference>
<dbReference type="PANTHER" id="PTHR48099:SF5">
    <property type="entry name" value="C-1-TETRAHYDROFOLATE SYNTHASE, CYTOPLASMIC"/>
    <property type="match status" value="1"/>
</dbReference>
<dbReference type="PANTHER" id="PTHR48099">
    <property type="entry name" value="C-1-TETRAHYDROFOLATE SYNTHASE, CYTOPLASMIC-RELATED"/>
    <property type="match status" value="1"/>
</dbReference>
<dbReference type="Pfam" id="PF00763">
    <property type="entry name" value="THF_DHG_CYH"/>
    <property type="match status" value="1"/>
</dbReference>
<dbReference type="Pfam" id="PF02882">
    <property type="entry name" value="THF_DHG_CYH_C"/>
    <property type="match status" value="1"/>
</dbReference>
<dbReference type="PRINTS" id="PR00085">
    <property type="entry name" value="THFDHDRGNASE"/>
</dbReference>
<dbReference type="SUPFAM" id="SSF53223">
    <property type="entry name" value="Aminoacid dehydrogenase-like, N-terminal domain"/>
    <property type="match status" value="1"/>
</dbReference>
<dbReference type="SUPFAM" id="SSF51735">
    <property type="entry name" value="NAD(P)-binding Rossmann-fold domains"/>
    <property type="match status" value="1"/>
</dbReference>
<dbReference type="PROSITE" id="PS00767">
    <property type="entry name" value="THF_DHG_CYH_2"/>
    <property type="match status" value="1"/>
</dbReference>
<feature type="chain" id="PRO_0000305861" description="Bifunctional protein FolD">
    <location>
        <begin position="1"/>
        <end position="298"/>
    </location>
</feature>
<feature type="binding site" evidence="1">
    <location>
        <begin position="165"/>
        <end position="167"/>
    </location>
    <ligand>
        <name>NADP(+)</name>
        <dbReference type="ChEBI" id="CHEBI:58349"/>
    </ligand>
</feature>
<feature type="binding site" evidence="1">
    <location>
        <position position="190"/>
    </location>
    <ligand>
        <name>NADP(+)</name>
        <dbReference type="ChEBI" id="CHEBI:58349"/>
    </ligand>
</feature>
<feature type="binding site" evidence="1">
    <location>
        <position position="231"/>
    </location>
    <ligand>
        <name>NADP(+)</name>
        <dbReference type="ChEBI" id="CHEBI:58349"/>
    </ligand>
</feature>
<gene>
    <name evidence="1" type="primary">folD</name>
    <name type="ordered locus">A9601_11741</name>
</gene>
<evidence type="ECO:0000255" key="1">
    <source>
        <dbReference type="HAMAP-Rule" id="MF_01576"/>
    </source>
</evidence>
<reference key="1">
    <citation type="journal article" date="2007" name="PLoS Genet.">
        <title>Patterns and implications of gene gain and loss in the evolution of Prochlorococcus.</title>
        <authorList>
            <person name="Kettler G.C."/>
            <person name="Martiny A.C."/>
            <person name="Huang K."/>
            <person name="Zucker J."/>
            <person name="Coleman M.L."/>
            <person name="Rodrigue S."/>
            <person name="Chen F."/>
            <person name="Lapidus A."/>
            <person name="Ferriera S."/>
            <person name="Johnson J."/>
            <person name="Steglich C."/>
            <person name="Church G.M."/>
            <person name="Richardson P."/>
            <person name="Chisholm S.W."/>
        </authorList>
    </citation>
    <scope>NUCLEOTIDE SEQUENCE [LARGE SCALE GENOMIC DNA]</scope>
    <source>
        <strain>AS9601</strain>
    </source>
</reference>
<proteinExistence type="inferred from homology"/>
<accession>A2BRP7</accession>